<protein>
    <recommendedName>
        <fullName evidence="4">Nonribosomal peptide synthetase asqK</fullName>
        <shortName evidence="4">NRPS asqK</shortName>
        <ecNumber evidence="3">6.3.2.-</ecNumber>
        <ecNumber evidence="3">6.3.2.40</ecNumber>
    </recommendedName>
    <alternativeName>
        <fullName evidence="5">4'-methoxyviridicatin/aspoquinolone biosynthesis cluster protein asqK</fullName>
    </alternativeName>
    <alternativeName>
        <fullName evidence="4">Aspoquinolone biosynthesis protein K</fullName>
    </alternativeName>
</protein>
<gene>
    <name evidence="4" type="primary">asqK</name>
    <name type="ORF">AN9226</name>
</gene>
<comment type="function">
    <text evidence="3 5">Nonribosomal peptide synthetase; part of the gene cluster that mediates the biosynthesis of the aspoquinolone mycotoxins (PubMed:25251934). The first stage is catalyzed by the nonribosomal peptide synthetase asqK that condenses anthranilic acid and O-methyl-L-tyrosine to produce 4'-methoxycyclopeptin (PubMed:25251934). AsqK is also able to use anthranilic acid and L-phenylalanine as substrates to produce cyclopeptin, but at a tenfold lower rate (PubMed:25251934). Within the pathway, 4'-methoxycyclopeptin is then converted to 4'-methoxydehydrocyclopeptin by the ketoglutarate-dependent dioxygenase asqJ. AsqJ also converts its first product 4'-methoxydehydrocyclopeptin to 4'-methoxycyclopenin. The following conversion of 4'-methoxycyclopenin into 4'-methoxyviridicatin is catalyzed by the cyclopenase asqI. 4'-methoxyviridicatin is the precursor of quinolone natural products, and is further converted to quinolinone B. The prenyltransferase asqH1 then catalyzes the canonical Friedel-Crafts alkylation of quinolinone B with dimethylallyl cation to yield dimethylallyl quinolone, which is subjected to FAD-dependent dehydrogenation by the FAD-linked oxidoreductase asqF to yield conjugated aryl diene. The delta(3') double bond then serves as the site of the second alkylation with DMAPP catalyzed by the prenyltransferase asqH2 to yield a carbenium ion intermediate, which can be attacked by H(2)O to yield a styrenyl quinolone containing a C3'-hydroxyprenyl chain. The FAD-dependent monooxygenase asqG performs epoxidation of the terminal C7'-C8' olefin. Finally, after dehydratation of the epoxide at C3 by asqC, the quinolone epoxide rearrangement protein asqO catalyzes an enzymatic 3-exo-tet cyclization to yield the cyclopropyl-THF ring system in aspoquinolone (Probable).</text>
</comment>
<comment type="catalytic activity">
    <reaction evidence="3">
        <text>O-methyl-L-tyrosine + anthranilate + S-adenosyl-L-methionine + 2 ATP = (-)-4'-methoxycyclopeptine + 2 AMP + S-adenosyl-L-homocysteine + 2 diphosphate + 2 H(+)</text>
        <dbReference type="Rhea" id="RHEA:74487"/>
        <dbReference type="ChEBI" id="CHEBI:15378"/>
        <dbReference type="ChEBI" id="CHEBI:16567"/>
        <dbReference type="ChEBI" id="CHEBI:30616"/>
        <dbReference type="ChEBI" id="CHEBI:33019"/>
        <dbReference type="ChEBI" id="CHEBI:57856"/>
        <dbReference type="ChEBI" id="CHEBI:59789"/>
        <dbReference type="ChEBI" id="CHEBI:193537"/>
        <dbReference type="ChEBI" id="CHEBI:193554"/>
        <dbReference type="ChEBI" id="CHEBI:456215"/>
    </reaction>
    <physiologicalReaction direction="left-to-right" evidence="3">
        <dbReference type="Rhea" id="RHEA:74488"/>
    </physiologicalReaction>
</comment>
<comment type="catalytic activity">
    <reaction evidence="3">
        <text>anthranilate + L-phenylalanine + S-adenosyl-L-methionine + 2 ATP = cyclopeptine + 2 AMP + S-adenosyl-L-homocysteine + 2 diphosphate + 2 H(+)</text>
        <dbReference type="Rhea" id="RHEA:35091"/>
        <dbReference type="ChEBI" id="CHEBI:15378"/>
        <dbReference type="ChEBI" id="CHEBI:16567"/>
        <dbReference type="ChEBI" id="CHEBI:30616"/>
        <dbReference type="ChEBI" id="CHEBI:33019"/>
        <dbReference type="ChEBI" id="CHEBI:57856"/>
        <dbReference type="ChEBI" id="CHEBI:58095"/>
        <dbReference type="ChEBI" id="CHEBI:59789"/>
        <dbReference type="ChEBI" id="CHEBI:71320"/>
        <dbReference type="ChEBI" id="CHEBI:456215"/>
        <dbReference type="EC" id="6.3.2.40"/>
    </reaction>
    <physiologicalReaction direction="left-to-right" evidence="3">
        <dbReference type="Rhea" id="RHEA:35092"/>
    </physiologicalReaction>
</comment>
<comment type="pathway">
    <text evidence="3">Secondary metabolite biosynthesis.</text>
</comment>
<comment type="pathway">
    <text evidence="3">Alkaloid biosynthesis.</text>
</comment>
<comment type="pathway">
    <text evidence="3">Mycotoxin biosynthesis.</text>
</comment>
<comment type="domain">
    <text evidence="6">NRP synthetases are composed of discrete domains (adenylation (A), thiolation (T) or peptidyl carrier protein (PCP) and condensation (C) domains) which when grouped together are referred to as a single module. Each module is responsible for the recognition (via the A domain) and incorporation of a single amino acid into the growing peptide product. Thus, an NRP synthetase is generally composed of one or more modules and can terminate in a thioesterase domain (TE) that releases the newly synthesized peptide from the enzyme. Occasionally, methyltransferase domains (responsible for amino acid methylation) are present within the NRP synthetase. AsqK has the following architecture:A-T-C-A-M-T-C.</text>
</comment>
<comment type="similarity">
    <text evidence="5">Belongs to the NRP synthetase family.</text>
</comment>
<dbReference type="EC" id="6.3.2.-" evidence="3"/>
<dbReference type="EC" id="6.3.2.40" evidence="3"/>
<dbReference type="EMBL" id="BN001306">
    <property type="protein sequence ID" value="CBF82283.1"/>
    <property type="molecule type" value="Genomic_DNA"/>
</dbReference>
<dbReference type="EMBL" id="AACD01000170">
    <property type="protein sequence ID" value="EAA61517.1"/>
    <property type="molecule type" value="Genomic_DNA"/>
</dbReference>
<dbReference type="RefSeq" id="XP_682495.1">
    <property type="nucleotide sequence ID" value="XM_677403.1"/>
</dbReference>
<dbReference type="SMR" id="Q5AR54"/>
<dbReference type="STRING" id="227321.Q5AR54"/>
<dbReference type="EnsemblFungi" id="CBF82283">
    <property type="protein sequence ID" value="CBF82283"/>
    <property type="gene ID" value="ANIA_09226"/>
</dbReference>
<dbReference type="KEGG" id="ani:ANIA_09226"/>
<dbReference type="eggNOG" id="KOG1178">
    <property type="taxonomic scope" value="Eukaryota"/>
</dbReference>
<dbReference type="HOGENOM" id="CLU_000022_60_1_1"/>
<dbReference type="InParanoid" id="Q5AR54"/>
<dbReference type="OMA" id="LVCIDYM"/>
<dbReference type="OrthoDB" id="416786at2759"/>
<dbReference type="Proteomes" id="UP000000560">
    <property type="component" value="Chromosome VI"/>
</dbReference>
<dbReference type="GO" id="GO:0005737">
    <property type="term" value="C:cytoplasm"/>
    <property type="evidence" value="ECO:0000318"/>
    <property type="project" value="GO_Central"/>
</dbReference>
<dbReference type="GO" id="GO:0047671">
    <property type="term" value="F:cyclopeptine synthase activity"/>
    <property type="evidence" value="ECO:0007669"/>
    <property type="project" value="RHEA"/>
</dbReference>
<dbReference type="GO" id="GO:0016853">
    <property type="term" value="F:isomerase activity"/>
    <property type="evidence" value="ECO:0007669"/>
    <property type="project" value="UniProtKB-KW"/>
</dbReference>
<dbReference type="GO" id="GO:0031177">
    <property type="term" value="F:phosphopantetheine binding"/>
    <property type="evidence" value="ECO:0000318"/>
    <property type="project" value="GO_Central"/>
</dbReference>
<dbReference type="GO" id="GO:0008757">
    <property type="term" value="F:S-adenosylmethionine-dependent methyltransferase activity"/>
    <property type="evidence" value="ECO:0007669"/>
    <property type="project" value="InterPro"/>
</dbReference>
<dbReference type="GO" id="GO:0043041">
    <property type="term" value="P:amino acid activation for nonribosomal peptide biosynthetic process"/>
    <property type="evidence" value="ECO:0000318"/>
    <property type="project" value="GO_Central"/>
</dbReference>
<dbReference type="GO" id="GO:0032259">
    <property type="term" value="P:methylation"/>
    <property type="evidence" value="ECO:0007669"/>
    <property type="project" value="UniProtKB-KW"/>
</dbReference>
<dbReference type="GO" id="GO:0044550">
    <property type="term" value="P:secondary metabolite biosynthetic process"/>
    <property type="evidence" value="ECO:0000318"/>
    <property type="project" value="GO_Central"/>
</dbReference>
<dbReference type="CDD" id="cd05930">
    <property type="entry name" value="A_NRPS"/>
    <property type="match status" value="1"/>
</dbReference>
<dbReference type="CDD" id="cd05918">
    <property type="entry name" value="A_NRPS_SidN3_like"/>
    <property type="match status" value="1"/>
</dbReference>
<dbReference type="CDD" id="cd19531">
    <property type="entry name" value="LCL_NRPS-like"/>
    <property type="match status" value="1"/>
</dbReference>
<dbReference type="FunFam" id="2.30.38.10:FF:000013">
    <property type="entry name" value="Enniatin synthase"/>
    <property type="match status" value="1"/>
</dbReference>
<dbReference type="FunFam" id="3.40.50.150:FF:000709">
    <property type="entry name" value="Enniatin synthase"/>
    <property type="match status" value="1"/>
</dbReference>
<dbReference type="FunFam" id="1.10.1200.10:FF:000016">
    <property type="entry name" value="Non-ribosomal peptide synthase"/>
    <property type="match status" value="1"/>
</dbReference>
<dbReference type="FunFam" id="3.30.300.30:FF:000015">
    <property type="entry name" value="Nonribosomal peptide synthase SidD"/>
    <property type="match status" value="1"/>
</dbReference>
<dbReference type="Gene3D" id="3.30.300.30">
    <property type="match status" value="3"/>
</dbReference>
<dbReference type="Gene3D" id="3.40.50.980">
    <property type="match status" value="2"/>
</dbReference>
<dbReference type="Gene3D" id="1.10.1200.10">
    <property type="entry name" value="ACP-like"/>
    <property type="match status" value="2"/>
</dbReference>
<dbReference type="Gene3D" id="3.30.559.10">
    <property type="entry name" value="Chloramphenicol acetyltransferase-like domain"/>
    <property type="match status" value="3"/>
</dbReference>
<dbReference type="Gene3D" id="2.30.38.10">
    <property type="entry name" value="Luciferase, Domain 3"/>
    <property type="match status" value="1"/>
</dbReference>
<dbReference type="Gene3D" id="3.40.50.12780">
    <property type="entry name" value="N-terminal domain of ligase-like"/>
    <property type="match status" value="1"/>
</dbReference>
<dbReference type="Gene3D" id="3.30.559.30">
    <property type="entry name" value="Nonribosomal peptide synthetase, condensation domain"/>
    <property type="match status" value="2"/>
</dbReference>
<dbReference type="Gene3D" id="3.40.50.150">
    <property type="entry name" value="Vaccinia Virus protein VP39"/>
    <property type="match status" value="1"/>
</dbReference>
<dbReference type="InterPro" id="IPR010071">
    <property type="entry name" value="AA_adenyl_dom"/>
</dbReference>
<dbReference type="InterPro" id="IPR036736">
    <property type="entry name" value="ACP-like_sf"/>
</dbReference>
<dbReference type="InterPro" id="IPR045851">
    <property type="entry name" value="AMP-bd_C_sf"/>
</dbReference>
<dbReference type="InterPro" id="IPR020845">
    <property type="entry name" value="AMP-binding_CS"/>
</dbReference>
<dbReference type="InterPro" id="IPR000873">
    <property type="entry name" value="AMP-dep_synth/lig_dom"/>
</dbReference>
<dbReference type="InterPro" id="IPR042099">
    <property type="entry name" value="ANL_N_sf"/>
</dbReference>
<dbReference type="InterPro" id="IPR023213">
    <property type="entry name" value="CAT-like_dom_sf"/>
</dbReference>
<dbReference type="InterPro" id="IPR001242">
    <property type="entry name" value="Condensatn"/>
</dbReference>
<dbReference type="InterPro" id="IPR013216">
    <property type="entry name" value="Methyltransf_11"/>
</dbReference>
<dbReference type="InterPro" id="IPR020806">
    <property type="entry name" value="PKS_PP-bd"/>
</dbReference>
<dbReference type="InterPro" id="IPR009081">
    <property type="entry name" value="PP-bd_ACP"/>
</dbReference>
<dbReference type="InterPro" id="IPR006162">
    <property type="entry name" value="Ppantetheine_attach_site"/>
</dbReference>
<dbReference type="InterPro" id="IPR029063">
    <property type="entry name" value="SAM-dependent_MTases_sf"/>
</dbReference>
<dbReference type="NCBIfam" id="TIGR01733">
    <property type="entry name" value="AA-adenyl-dom"/>
    <property type="match status" value="1"/>
</dbReference>
<dbReference type="PANTHER" id="PTHR45527:SF1">
    <property type="entry name" value="FATTY ACID SYNTHASE"/>
    <property type="match status" value="1"/>
</dbReference>
<dbReference type="PANTHER" id="PTHR45527">
    <property type="entry name" value="NONRIBOSOMAL PEPTIDE SYNTHETASE"/>
    <property type="match status" value="1"/>
</dbReference>
<dbReference type="Pfam" id="PF00501">
    <property type="entry name" value="AMP-binding"/>
    <property type="match status" value="2"/>
</dbReference>
<dbReference type="Pfam" id="PF00668">
    <property type="entry name" value="Condensation"/>
    <property type="match status" value="2"/>
</dbReference>
<dbReference type="Pfam" id="PF08241">
    <property type="entry name" value="Methyltransf_11"/>
    <property type="match status" value="1"/>
</dbReference>
<dbReference type="Pfam" id="PF00550">
    <property type="entry name" value="PP-binding"/>
    <property type="match status" value="2"/>
</dbReference>
<dbReference type="SMART" id="SM00823">
    <property type="entry name" value="PKS_PP"/>
    <property type="match status" value="2"/>
</dbReference>
<dbReference type="SUPFAM" id="SSF56801">
    <property type="entry name" value="Acetyl-CoA synthetase-like"/>
    <property type="match status" value="2"/>
</dbReference>
<dbReference type="SUPFAM" id="SSF47336">
    <property type="entry name" value="ACP-like"/>
    <property type="match status" value="2"/>
</dbReference>
<dbReference type="SUPFAM" id="SSF52777">
    <property type="entry name" value="CoA-dependent acyltransferases"/>
    <property type="match status" value="4"/>
</dbReference>
<dbReference type="SUPFAM" id="SSF53335">
    <property type="entry name" value="S-adenosyl-L-methionine-dependent methyltransferases"/>
    <property type="match status" value="1"/>
</dbReference>
<dbReference type="PROSITE" id="PS00455">
    <property type="entry name" value="AMP_BINDING"/>
    <property type="match status" value="2"/>
</dbReference>
<dbReference type="PROSITE" id="PS50075">
    <property type="entry name" value="CARRIER"/>
    <property type="match status" value="2"/>
</dbReference>
<dbReference type="PROSITE" id="PS00012">
    <property type="entry name" value="PHOSPHOPANTETHEINE"/>
    <property type="match status" value="1"/>
</dbReference>
<organism>
    <name type="scientific">Emericella nidulans (strain FGSC A4 / ATCC 38163 / CBS 112.46 / NRRL 194 / M139)</name>
    <name type="common">Aspergillus nidulans</name>
    <dbReference type="NCBI Taxonomy" id="227321"/>
    <lineage>
        <taxon>Eukaryota</taxon>
        <taxon>Fungi</taxon>
        <taxon>Dikarya</taxon>
        <taxon>Ascomycota</taxon>
        <taxon>Pezizomycotina</taxon>
        <taxon>Eurotiomycetes</taxon>
        <taxon>Eurotiomycetidae</taxon>
        <taxon>Eurotiales</taxon>
        <taxon>Aspergillaceae</taxon>
        <taxon>Aspergillus</taxon>
        <taxon>Aspergillus subgen. Nidulantes</taxon>
    </lineage>
</organism>
<feature type="chain" id="PRO_0000437606" description="Nonribosomal peptide synthetase asqK">
    <location>
        <begin position="1"/>
        <end position="2559"/>
    </location>
</feature>
<feature type="domain" description="Carrier 1" evidence="2">
    <location>
        <begin position="593"/>
        <end position="669"/>
    </location>
</feature>
<feature type="domain" description="Carrier 2" evidence="2">
    <location>
        <begin position="2090"/>
        <end position="2164"/>
    </location>
</feature>
<feature type="region of interest" description="Adenylation 1" evidence="1">
    <location>
        <begin position="90"/>
        <end position="474"/>
    </location>
</feature>
<feature type="region of interest" description="Condensation 1" evidence="1">
    <location>
        <begin position="695"/>
        <end position="989"/>
    </location>
</feature>
<feature type="region of interest" description="Adenylation 2" evidence="1">
    <location>
        <begin position="1155"/>
        <end position="1562"/>
    </location>
</feature>
<feature type="region of interest" description="Methyltransferase" evidence="1">
    <location>
        <begin position="1681"/>
        <end position="1776"/>
    </location>
</feature>
<feature type="region of interest" description="Condensation 2" evidence="1">
    <location>
        <begin position="2261"/>
        <end position="2409"/>
    </location>
</feature>
<feature type="modified residue" description="O-(pantetheine 4'-phosphoryl)serine" evidence="2">
    <location>
        <position position="627"/>
    </location>
</feature>
<feature type="modified residue" description="O-(pantetheine 4'-phosphoryl)serine" evidence="2">
    <location>
        <position position="2124"/>
    </location>
</feature>
<keyword id="KW-0413">Isomerase</keyword>
<keyword id="KW-0436">Ligase</keyword>
<keyword id="KW-0489">Methyltransferase</keyword>
<keyword id="KW-0596">Phosphopantetheine</keyword>
<keyword id="KW-0597">Phosphoprotein</keyword>
<keyword id="KW-1185">Reference proteome</keyword>
<keyword id="KW-0677">Repeat</keyword>
<keyword id="KW-0808">Transferase</keyword>
<accession>Q5AR54</accession>
<accession>C8VJQ5</accession>
<name>ASQK_EMENI</name>
<reference key="1">
    <citation type="journal article" date="2005" name="Nature">
        <title>Sequencing of Aspergillus nidulans and comparative analysis with A. fumigatus and A. oryzae.</title>
        <authorList>
            <person name="Galagan J.E."/>
            <person name="Calvo S.E."/>
            <person name="Cuomo C."/>
            <person name="Ma L.-J."/>
            <person name="Wortman J.R."/>
            <person name="Batzoglou S."/>
            <person name="Lee S.-I."/>
            <person name="Bastuerkmen M."/>
            <person name="Spevak C.C."/>
            <person name="Clutterbuck J."/>
            <person name="Kapitonov V."/>
            <person name="Jurka J."/>
            <person name="Scazzocchio C."/>
            <person name="Farman M.L."/>
            <person name="Butler J."/>
            <person name="Purcell S."/>
            <person name="Harris S."/>
            <person name="Braus G.H."/>
            <person name="Draht O."/>
            <person name="Busch S."/>
            <person name="D'Enfert C."/>
            <person name="Bouchier C."/>
            <person name="Goldman G.H."/>
            <person name="Bell-Pedersen D."/>
            <person name="Griffiths-Jones S."/>
            <person name="Doonan J.H."/>
            <person name="Yu J."/>
            <person name="Vienken K."/>
            <person name="Pain A."/>
            <person name="Freitag M."/>
            <person name="Selker E.U."/>
            <person name="Archer D.B."/>
            <person name="Penalva M.A."/>
            <person name="Oakley B.R."/>
            <person name="Momany M."/>
            <person name="Tanaka T."/>
            <person name="Kumagai T."/>
            <person name="Asai K."/>
            <person name="Machida M."/>
            <person name="Nierman W.C."/>
            <person name="Denning D.W."/>
            <person name="Caddick M.X."/>
            <person name="Hynes M."/>
            <person name="Paoletti M."/>
            <person name="Fischer R."/>
            <person name="Miller B.L."/>
            <person name="Dyer P.S."/>
            <person name="Sachs M.S."/>
            <person name="Osmani S.A."/>
            <person name="Birren B.W."/>
        </authorList>
    </citation>
    <scope>NUCLEOTIDE SEQUENCE [LARGE SCALE GENOMIC DNA]</scope>
    <source>
        <strain>FGSC A4 / ATCC 38163 / CBS 112.46 / NRRL 194 / M139</strain>
    </source>
</reference>
<reference key="2">
    <citation type="journal article" date="2009" name="Fungal Genet. Biol.">
        <title>The 2008 update of the Aspergillus nidulans genome annotation: a community effort.</title>
        <authorList>
            <person name="Wortman J.R."/>
            <person name="Gilsenan J.M."/>
            <person name="Joardar V."/>
            <person name="Deegan J."/>
            <person name="Clutterbuck J."/>
            <person name="Andersen M.R."/>
            <person name="Archer D."/>
            <person name="Bencina M."/>
            <person name="Braus G."/>
            <person name="Coutinho P."/>
            <person name="von Dohren H."/>
            <person name="Doonan J."/>
            <person name="Driessen A.J."/>
            <person name="Durek P."/>
            <person name="Espeso E."/>
            <person name="Fekete E."/>
            <person name="Flipphi M."/>
            <person name="Estrada C.G."/>
            <person name="Geysens S."/>
            <person name="Goldman G."/>
            <person name="de Groot P.W."/>
            <person name="Hansen K."/>
            <person name="Harris S.D."/>
            <person name="Heinekamp T."/>
            <person name="Helmstaedt K."/>
            <person name="Henrissat B."/>
            <person name="Hofmann G."/>
            <person name="Homan T."/>
            <person name="Horio T."/>
            <person name="Horiuchi H."/>
            <person name="James S."/>
            <person name="Jones M."/>
            <person name="Karaffa L."/>
            <person name="Karanyi Z."/>
            <person name="Kato M."/>
            <person name="Keller N."/>
            <person name="Kelly D.E."/>
            <person name="Kiel J.A."/>
            <person name="Kim J.M."/>
            <person name="van der Klei I.J."/>
            <person name="Klis F.M."/>
            <person name="Kovalchuk A."/>
            <person name="Krasevec N."/>
            <person name="Kubicek C.P."/>
            <person name="Liu B."/>
            <person name="Maccabe A."/>
            <person name="Meyer V."/>
            <person name="Mirabito P."/>
            <person name="Miskei M."/>
            <person name="Mos M."/>
            <person name="Mullins J."/>
            <person name="Nelson D.R."/>
            <person name="Nielsen J."/>
            <person name="Oakley B.R."/>
            <person name="Osmani S.A."/>
            <person name="Pakula T."/>
            <person name="Paszewski A."/>
            <person name="Paulsen I."/>
            <person name="Pilsyk S."/>
            <person name="Pocsi I."/>
            <person name="Punt P.J."/>
            <person name="Ram A.F."/>
            <person name="Ren Q."/>
            <person name="Robellet X."/>
            <person name="Robson G."/>
            <person name="Seiboth B."/>
            <person name="van Solingen P."/>
            <person name="Specht T."/>
            <person name="Sun J."/>
            <person name="Taheri-Talesh N."/>
            <person name="Takeshita N."/>
            <person name="Ussery D."/>
            <person name="vanKuyk P.A."/>
            <person name="Visser H."/>
            <person name="van de Vondervoort P.J."/>
            <person name="de Vries R.P."/>
            <person name="Walton J."/>
            <person name="Xiang X."/>
            <person name="Xiong Y."/>
            <person name="Zeng A.P."/>
            <person name="Brandt B.W."/>
            <person name="Cornell M.J."/>
            <person name="van den Hondel C.A."/>
            <person name="Visser J."/>
            <person name="Oliver S.G."/>
            <person name="Turner G."/>
        </authorList>
    </citation>
    <scope>GENOME REANNOTATION</scope>
    <source>
        <strain>FGSC A4 / ATCC 38163 / CBS 112.46 / NRRL 194 / M139</strain>
    </source>
</reference>
<reference key="3">
    <citation type="journal article" date="2014" name="Angew. Chem. Int. Ed.">
        <title>Non-heme dioxygenase catalyzes atypical oxidations of 6,7-bicyclic systems to form the 6,6-quinolone core of viridicatin-type fungal alkaloids.</title>
        <authorList>
            <person name="Ishikawa N."/>
            <person name="Tanaka H."/>
            <person name="Koyama F."/>
            <person name="Noguchi H."/>
            <person name="Wang C.C."/>
            <person name="Hotta K."/>
            <person name="Watanabe K."/>
        </authorList>
    </citation>
    <scope>FUNCTION</scope>
    <scope>CATALYTIC ACTIVITY</scope>
    <scope>PATHWAY</scope>
</reference>
<proteinExistence type="evidence at protein level"/>
<sequence length="2559" mass="283059">MAVSYTNFTNLPAKLYLVYRACTFTPLHAENLASNITQAMKQLLAQPDACVKDIDIFSPFNEITVSRWNAEIQEAPDASLLEVIRGHSRYRPSHTAIHAWDGTVSYSELDVTSTKWAIYLQSQGVKAGCLVPIMMDHSKWAVIGQLAILKAGGAFVPLDPGQPLFRLENIVRLTTESHISLSSPHLANRLHGLVETVLVISDERTESLPKANAHHDAADISPVVNNGPAYVLFTSGSTGRPKGCVVGYGALSDVVNQTTALKIGPDSRVLQFASYTYGMSLIEIYCTLAAGATICVPSEDDRLNALSSILLSMQVTWAILTPSTTISIADAVVCLNTLVVAGEALTMDRLHSLADKTEVIQAFGLTEWAGICCVSQRITSETDLRVIGRSHTARLRLVDPANYNRLAPVGAVAELLIEGPAMADGYLGDPEQTARAFPKTSTGGRFYRTGDLVQYAADGSLRYVSRKDSQVKIRGMRVELTEVEYQIRRAFPGVEEVVVEAAAPKNSSGIPILVAFLCPEDLSGLVCTIKETMKRSLPDYMRPSVYVPLEFIPKTISRKVDRKALRHLVQSSTRHELERYTQASLPSLVGPRTNIEQLVHELVADMLRLDPLSLGMRQNFISLGGDSVTAMLLVNKLRRKGYKITVAAILRAQSLLDVASLVHYPAGLEPSAQKSTPGDLKLVPRAIHRISDSGTVEQSFSQARIWFLQTLRPSSTWLLLPSATRLRGSLRVDALETAFSALVERHETLRTTFEDREGSGVQVVAPFHPYQLEIIEIPSGSDADLITALHGQQIRPMDLTKECWRATLFRLSPDEHVLNIVLHHIICDGWSFDIFLKTLQIYYAAALQGHSPLEGVEPLPIQYRDFSIWQRQNKARTSVEQLAYWVRQLDGSQPAEFLCDKKRPHMLSGKAGSQPVKIDVCLYHDVKRFCSMKHVTPFTVLFAAFRATHYRLTGASDATIGIPSVSRPQAELEELIGYFGNVQCIRTKVESCSSSFQLLVHQVQSSITAAFENQDVPFDQIVSKLLKDRDVSRHPLVQVAFILHTQAQFGKLRLEGLESEQLPLPHVSRLDLEFHLYPGEGGGDLQGEVLYSMDLFHAETINAMVLVFYDILREGIRKPDTSIDSLPFPGGYSILNERGLIYPQQSRSLSIIDLFDEQVRAQTDEVAVKDINGHLTYSELHKRSSMLSAWLKNSYSFAEETPVGVYASRSCESIVAILGILRAGLAYIRLDIDAPKARTEMILSCLPNCRLVLVASGLEPPRVCVQGVQFAYIADSCKETVTDVHDFLKTCTPPGPMSLAYIVFTSGTTGTPKGVMIEHHGVANLAKEPDIIAHAVNSRIASHMLNPSFDASGFEIYATLLNGGTLVCIDNSVVFDFPALGATFIQHGIRRAFMTPAILKQTLASCNSLLRMLDILYVGGDKLDPGDVAKVQRLTTGRVQIFNCYGPTENSIVSTKYRVPVDEEGVNGVPIGRSISNIGAYVVDRSLRLLPLGVLGELVVTGPALARGYIDPKHDIGRFIELDISEEVAPMRAYRTGDMVRYRPRDAQLEFFGRMDQQVKVRGYRVELAEIDNTLLLSPFISAAVTVARQDQELVSFVTVSDMASGFNDRAETEHVDSWLDVVEGEDYYGSVGTIEPHSLGADFLGWISMYDGEPIDKNDMREWLQDTITAILSCSPSSVLEIGTGSGMILFNIIGSIQKYVGLEPSPRAVDFVRRAVHWVPEAAGKVNIKCGTASDIGRLQDMGTLDLAVINSVAQYFPSLDYLRNTIKDLVRQGVKSIFLGDIRSYALYQEFQVSKVLRLYGRGLTITRFRQHMAEIARLEKELLVDPAFFTSLPAELPGMIEHVEIWPKRMKATNELSCYRYTAVLHVKRAEQPLLIREVKEISWADFQAKGWDYNSLSQMLEISDASTVLAVENIPFKKTIVERDMVRLLQELPEDTGSVSWSSNARGPKRALAPIDLFDVAKKTGWDIEISWARQRSQRGGLDAVFHRQGPRVLFRFPVDPYIPGACSNDPLSPQRNRLLEKHLLEYMSTKLPTYMVPKLIHVLDKMPINNIGKVDRHVLAQRAAITSATISESESLFRREIEPAFTSEIERAVWEEFTGVLGREVGVADSFFRNGGHSLMAIRLVSRINKRLSSALSVSELFRYPTVSGLAQHLQGLGALETRAVTVYAPFSLLDRPYDPSEVRLPPEADIVDVTPVTECQAWFLQCWSLVSHSFIIHGVLDVDRLRAACQAVVRHHPPLRTVFTEFQTQLVQAFDGVSLSAILYDIARAYGNSASPLSNAVPFSHHLHMCRSTRPDALAFWKAYLRDAVLTEVPRPEEVNATNEKPLEIIQQEALGEVSLPSTVDITFSTLVNAAIALALARLVQRNDVIFACVMTSRGVLAELAESVVGPCVNRCLLRVKVPDDSNPDSTALDFCRNLRDNQAQVSGHGHLGFRDVVENCTSWASLGVDVGRIAFVTHLPAETALETFSLTLLDSPVSYDSTNVTINPGNQILVRSAITDEQQACIQVLSSSNVMGAEKALFLANRILMIAQRLSVSVSGGRSPRLLELDK</sequence>
<evidence type="ECO:0000255" key="1"/>
<evidence type="ECO:0000255" key="2">
    <source>
        <dbReference type="PROSITE-ProRule" id="PRU00258"/>
    </source>
</evidence>
<evidence type="ECO:0000269" key="3">
    <source>
    </source>
</evidence>
<evidence type="ECO:0000303" key="4">
    <source>
    </source>
</evidence>
<evidence type="ECO:0000305" key="5"/>
<evidence type="ECO:0000305" key="6">
    <source>
    </source>
</evidence>